<evidence type="ECO:0000255" key="1">
    <source>
        <dbReference type="HAMAP-Rule" id="MF_00019"/>
    </source>
</evidence>
<name>PLSX_TRIEI</name>
<accession>Q114K1</accession>
<gene>
    <name evidence="1" type="primary">plsX</name>
    <name type="ordered locus">Tery_1816</name>
</gene>
<keyword id="KW-0963">Cytoplasm</keyword>
<keyword id="KW-0444">Lipid biosynthesis</keyword>
<keyword id="KW-0443">Lipid metabolism</keyword>
<keyword id="KW-0594">Phospholipid biosynthesis</keyword>
<keyword id="KW-1208">Phospholipid metabolism</keyword>
<keyword id="KW-0808">Transferase</keyword>
<sequence>MGTIPTKIAIDAMGGDYAPSEIVEGAIKAQEAYGVKVLLAGDPQQIKASMNHRLSQPLPEIVPAEDIVEMHEEPLMAVRRKPKASINIAMKLVKDKQADAVVSAGNSGAAMASALLRLGRIPGIDRPAIGAVLPTMIPKKPVLILDVGANVDCRPKYLDQFAVMGTIYSESVLATDEPKVGLLNIGEEPSKGNDLAVRTYQILQENNQIKFIGNAEGRDVLSGKFDVIVCDGFAGNILLKFAEAVGDAVLQMMREELTPGLSGKIGTAILRPNLKNMKQRIDHVEHGGGLLLGVGGICIISHGSSKAQSISNAVRSAKEAVENRVLERINSKYLLEVENQ</sequence>
<protein>
    <recommendedName>
        <fullName evidence="1">Phosphate acyltransferase</fullName>
        <ecNumber evidence="1">2.3.1.274</ecNumber>
    </recommendedName>
    <alternativeName>
        <fullName evidence="1">Acyl-ACP phosphotransacylase</fullName>
    </alternativeName>
    <alternativeName>
        <fullName evidence="1">Acyl-[acyl-carrier-protein]--phosphate acyltransferase</fullName>
    </alternativeName>
    <alternativeName>
        <fullName evidence="1">Phosphate-acyl-ACP acyltransferase</fullName>
    </alternativeName>
</protein>
<organism>
    <name type="scientific">Trichodesmium erythraeum (strain IMS101)</name>
    <dbReference type="NCBI Taxonomy" id="203124"/>
    <lineage>
        <taxon>Bacteria</taxon>
        <taxon>Bacillati</taxon>
        <taxon>Cyanobacteriota</taxon>
        <taxon>Cyanophyceae</taxon>
        <taxon>Oscillatoriophycideae</taxon>
        <taxon>Oscillatoriales</taxon>
        <taxon>Microcoleaceae</taxon>
        <taxon>Trichodesmium</taxon>
    </lineage>
</organism>
<proteinExistence type="inferred from homology"/>
<dbReference type="EC" id="2.3.1.274" evidence="1"/>
<dbReference type="EMBL" id="CP000393">
    <property type="protein sequence ID" value="ABG51073.1"/>
    <property type="molecule type" value="Genomic_DNA"/>
</dbReference>
<dbReference type="RefSeq" id="WP_011611448.1">
    <property type="nucleotide sequence ID" value="NC_008312.1"/>
</dbReference>
<dbReference type="SMR" id="Q114K1"/>
<dbReference type="STRING" id="203124.Tery_1816"/>
<dbReference type="KEGG" id="ter:Tery_1816"/>
<dbReference type="eggNOG" id="COG0416">
    <property type="taxonomic scope" value="Bacteria"/>
</dbReference>
<dbReference type="HOGENOM" id="CLU_039379_1_1_3"/>
<dbReference type="OrthoDB" id="9806408at2"/>
<dbReference type="UniPathway" id="UPA00085"/>
<dbReference type="GO" id="GO:0005737">
    <property type="term" value="C:cytoplasm"/>
    <property type="evidence" value="ECO:0007669"/>
    <property type="project" value="UniProtKB-SubCell"/>
</dbReference>
<dbReference type="GO" id="GO:0043811">
    <property type="term" value="F:phosphate:acyl-[acyl carrier protein] acyltransferase activity"/>
    <property type="evidence" value="ECO:0007669"/>
    <property type="project" value="UniProtKB-UniRule"/>
</dbReference>
<dbReference type="GO" id="GO:0006633">
    <property type="term" value="P:fatty acid biosynthetic process"/>
    <property type="evidence" value="ECO:0007669"/>
    <property type="project" value="UniProtKB-UniRule"/>
</dbReference>
<dbReference type="GO" id="GO:0008654">
    <property type="term" value="P:phospholipid biosynthetic process"/>
    <property type="evidence" value="ECO:0007669"/>
    <property type="project" value="UniProtKB-KW"/>
</dbReference>
<dbReference type="Gene3D" id="3.40.718.10">
    <property type="entry name" value="Isopropylmalate Dehydrogenase"/>
    <property type="match status" value="1"/>
</dbReference>
<dbReference type="HAMAP" id="MF_00019">
    <property type="entry name" value="PlsX"/>
    <property type="match status" value="1"/>
</dbReference>
<dbReference type="InterPro" id="IPR003664">
    <property type="entry name" value="FA_synthesis"/>
</dbReference>
<dbReference type="InterPro" id="IPR012281">
    <property type="entry name" value="Phospholipid_synth_PlsX-like"/>
</dbReference>
<dbReference type="NCBIfam" id="TIGR00182">
    <property type="entry name" value="plsX"/>
    <property type="match status" value="1"/>
</dbReference>
<dbReference type="PANTHER" id="PTHR30100">
    <property type="entry name" value="FATTY ACID/PHOSPHOLIPID SYNTHESIS PROTEIN PLSX"/>
    <property type="match status" value="1"/>
</dbReference>
<dbReference type="PANTHER" id="PTHR30100:SF1">
    <property type="entry name" value="PHOSPHATE ACYLTRANSFERASE"/>
    <property type="match status" value="1"/>
</dbReference>
<dbReference type="Pfam" id="PF02504">
    <property type="entry name" value="FA_synthesis"/>
    <property type="match status" value="1"/>
</dbReference>
<dbReference type="PIRSF" id="PIRSF002465">
    <property type="entry name" value="Phsphlp_syn_PlsX"/>
    <property type="match status" value="1"/>
</dbReference>
<dbReference type="SUPFAM" id="SSF53659">
    <property type="entry name" value="Isocitrate/Isopropylmalate dehydrogenase-like"/>
    <property type="match status" value="1"/>
</dbReference>
<feature type="chain" id="PRO_0000329277" description="Phosphate acyltransferase">
    <location>
        <begin position="1"/>
        <end position="340"/>
    </location>
</feature>
<comment type="function">
    <text evidence="1">Catalyzes the reversible formation of acyl-phosphate (acyl-PO(4)) from acyl-[acyl-carrier-protein] (acyl-ACP). This enzyme utilizes acyl-ACP as fatty acyl donor, but not acyl-CoA.</text>
</comment>
<comment type="catalytic activity">
    <reaction evidence="1">
        <text>a fatty acyl-[ACP] + phosphate = an acyl phosphate + holo-[ACP]</text>
        <dbReference type="Rhea" id="RHEA:42292"/>
        <dbReference type="Rhea" id="RHEA-COMP:9685"/>
        <dbReference type="Rhea" id="RHEA-COMP:14125"/>
        <dbReference type="ChEBI" id="CHEBI:43474"/>
        <dbReference type="ChEBI" id="CHEBI:59918"/>
        <dbReference type="ChEBI" id="CHEBI:64479"/>
        <dbReference type="ChEBI" id="CHEBI:138651"/>
        <dbReference type="EC" id="2.3.1.274"/>
    </reaction>
</comment>
<comment type="pathway">
    <text evidence="1">Lipid metabolism; phospholipid metabolism.</text>
</comment>
<comment type="subunit">
    <text evidence="1">Homodimer. Probably interacts with PlsY.</text>
</comment>
<comment type="subcellular location">
    <subcellularLocation>
        <location evidence="1">Cytoplasm</location>
    </subcellularLocation>
    <text evidence="1">Associated with the membrane possibly through PlsY.</text>
</comment>
<comment type="similarity">
    <text evidence="1">Belongs to the PlsX family.</text>
</comment>
<reference key="1">
    <citation type="journal article" date="2015" name="Proc. Natl. Acad. Sci. U.S.A.">
        <title>Trichodesmium genome maintains abundant, widespread noncoding DNA in situ, despite oligotrophic lifestyle.</title>
        <authorList>
            <person name="Walworth N."/>
            <person name="Pfreundt U."/>
            <person name="Nelson W.C."/>
            <person name="Mincer T."/>
            <person name="Heidelberg J.F."/>
            <person name="Fu F."/>
            <person name="Waterbury J.B."/>
            <person name="Glavina del Rio T."/>
            <person name="Goodwin L."/>
            <person name="Kyrpides N.C."/>
            <person name="Land M.L."/>
            <person name="Woyke T."/>
            <person name="Hutchins D.A."/>
            <person name="Hess W.R."/>
            <person name="Webb E.A."/>
        </authorList>
    </citation>
    <scope>NUCLEOTIDE SEQUENCE [LARGE SCALE GENOMIC DNA]</scope>
    <source>
        <strain>IMS101</strain>
    </source>
</reference>